<comment type="function">
    <text evidence="4 7 8">Thiol-specific peroxidase that catalyzes the reduction of hydrogen peroxide and organic hydroperoxides to water and alcohols, respectively. Plays a role in cell protection against oxidative stress by detoxifying peroxides and as sensor of hydrogen peroxide-mediated signaling events. Involved in mitochondrial protection of cadmium-induced oxidative stress.</text>
</comment>
<comment type="catalytic activity">
    <reaction evidence="7">
        <text>a hydroperoxide + 2 glutathione = an alcohol + glutathione disulfide + H2O</text>
        <dbReference type="Rhea" id="RHEA:62632"/>
        <dbReference type="ChEBI" id="CHEBI:15377"/>
        <dbReference type="ChEBI" id="CHEBI:30879"/>
        <dbReference type="ChEBI" id="CHEBI:35924"/>
        <dbReference type="ChEBI" id="CHEBI:57925"/>
        <dbReference type="ChEBI" id="CHEBI:58297"/>
        <dbReference type="EC" id="1.11.1.27"/>
    </reaction>
</comment>
<comment type="catalytic activity">
    <reaction evidence="8">
        <text>[glutaredoxin]-dithiol + a hydroperoxide = [glutaredoxin]-disulfide + an alcohol + H2O</text>
        <dbReference type="Rhea" id="RHEA:62624"/>
        <dbReference type="Rhea" id="RHEA-COMP:10729"/>
        <dbReference type="Rhea" id="RHEA-COMP:10730"/>
        <dbReference type="ChEBI" id="CHEBI:15377"/>
        <dbReference type="ChEBI" id="CHEBI:29950"/>
        <dbReference type="ChEBI" id="CHEBI:30879"/>
        <dbReference type="ChEBI" id="CHEBI:35924"/>
        <dbReference type="ChEBI" id="CHEBI:50058"/>
        <dbReference type="EC" id="1.11.1.25"/>
    </reaction>
</comment>
<comment type="biophysicochemical properties">
    <kinetics>
        <KM evidence="4">6.2 uM for H(2)O(2)</KM>
        <KM evidence="4">10.9 uM for tert-butyl hydroperoxide</KM>
        <KM evidence="4">8.1 uM for TRX3</KM>
        <Vmax evidence="4">8.5 umol/min/mg enzyme for H(2)O(2)</Vmax>
        <Vmax evidence="4">7.4 umol/min/mg enzyme for tert-butyl hydroperoxide</Vmax>
        <Vmax evidence="4">9.5 umol/min/mg enzyme for TRX3</Vmax>
    </kinetics>
    <phDependence>
        <text evidence="4 8">Optimum pH is 7.0 (PubMed:10821871). Optimum pH is 8.5 (using glutaredoxin as electron donor) (PubMed:20059400).</text>
    </phDependence>
</comment>
<comment type="subunit">
    <text evidence="4 15">Homodimer; disulfide-linked.</text>
</comment>
<comment type="subcellular location">
    <subcellularLocation>
        <location evidence="4 6">Mitochondrion</location>
    </subcellularLocation>
</comment>
<comment type="miscellaneous">
    <text evidence="14 15">The active site is a conserved redox-active cysteine residue, the peroxidatic cysteine (C(P)), which makes the nucleophilic attack on the peroxide substrate. The peroxide oxidizes the C(P)-SH to cysteine sulfenic acid (C(P)-SOH), which then reacts with another cysteine residue, the resolving cysteine (C(R)), to form a disulfide bridge. The disulfide is subsequently reduced by an appropriate electron donor to complete the catalytic cycle. In this 1-Cys peroxiredoxin, no C(R) is present and C(P) instead forms a disulfide with a cysteine from another protein or with a small thiol molecule. C(P) is reactivated by glutathionylation and subsequent reduction by either glutaredoxin GRX2 or thioredoxin reductase TRR2, coupled with reduced glutathione (GSH).</text>
</comment>
<comment type="miscellaneous">
    <text evidence="5">Present with 4510 molecules/cell in log phase SD medium.</text>
</comment>
<comment type="similarity">
    <text evidence="11">Belongs to the peroxiredoxin family. Prx6 subfamily.</text>
</comment>
<accession>P34227</accession>
<accession>D6VPT6</accession>
<protein>
    <recommendedName>
        <fullName evidence="11">Peroxiredoxin PRX1, mitochondrial</fullName>
        <shortName>Prx</shortName>
        <ecNumber evidence="8">1.11.1.25</ecNumber>
        <ecNumber evidence="7">1.11.1.27</ecNumber>
    </recommendedName>
    <alternativeName>
        <fullName>1-Cys PRX</fullName>
    </alternativeName>
    <alternativeName>
        <fullName evidence="11">Glutaredoxin-dependent peroxiredoxin</fullName>
    </alternativeName>
    <alternativeName>
        <fullName evidence="11">Glutathione-dependent peroxiredoxin</fullName>
    </alternativeName>
    <alternativeName>
        <fullName evidence="9">Mitochondrial thiol peroxidase</fullName>
        <shortName evidence="9">mTPx</shortName>
    </alternativeName>
    <alternativeName>
        <fullName>Thioredoxin peroxidase</fullName>
    </alternativeName>
</protein>
<reference key="1">
    <citation type="journal article" date="1993" name="Yeast">
        <title>Sequencing and functional analysis of a 32,560 bp segment on the left arm of yeast chromosome II. Identification of 26 open reading frames, including the KIP1 and SEC17 genes.</title>
        <authorList>
            <person name="Scherens B."/>
            <person name="el Bakkoury M."/>
            <person name="Vierendeels F."/>
            <person name="Dubois E."/>
            <person name="Messenguy F."/>
        </authorList>
    </citation>
    <scope>NUCLEOTIDE SEQUENCE [GENOMIC DNA]</scope>
    <source>
        <strain>ATCC 204508 / S288c</strain>
    </source>
</reference>
<reference key="2">
    <citation type="journal article" date="1994" name="EMBO J.">
        <title>Complete DNA sequence of yeast chromosome II.</title>
        <authorList>
            <person name="Feldmann H."/>
            <person name="Aigle M."/>
            <person name="Aljinovic G."/>
            <person name="Andre B."/>
            <person name="Baclet M.C."/>
            <person name="Barthe C."/>
            <person name="Baur A."/>
            <person name="Becam A.-M."/>
            <person name="Biteau N."/>
            <person name="Boles E."/>
            <person name="Brandt T."/>
            <person name="Brendel M."/>
            <person name="Brueckner M."/>
            <person name="Bussereau F."/>
            <person name="Christiansen C."/>
            <person name="Contreras R."/>
            <person name="Crouzet M."/>
            <person name="Cziepluch C."/>
            <person name="Demolis N."/>
            <person name="Delaveau T."/>
            <person name="Doignon F."/>
            <person name="Domdey H."/>
            <person name="Duesterhus S."/>
            <person name="Dubois E."/>
            <person name="Dujon B."/>
            <person name="El Bakkoury M."/>
            <person name="Entian K.-D."/>
            <person name="Feuermann M."/>
            <person name="Fiers W."/>
            <person name="Fobo G.M."/>
            <person name="Fritz C."/>
            <person name="Gassenhuber J."/>
            <person name="Glansdorff N."/>
            <person name="Goffeau A."/>
            <person name="Grivell L.A."/>
            <person name="de Haan M."/>
            <person name="Hein C."/>
            <person name="Herbert C.J."/>
            <person name="Hollenberg C.P."/>
            <person name="Holmstroem K."/>
            <person name="Jacq C."/>
            <person name="Jacquet M."/>
            <person name="Jauniaux J.-C."/>
            <person name="Jonniaux J.-L."/>
            <person name="Kallesoee T."/>
            <person name="Kiesau P."/>
            <person name="Kirchrath L."/>
            <person name="Koetter P."/>
            <person name="Korol S."/>
            <person name="Liebl S."/>
            <person name="Logghe M."/>
            <person name="Lohan A.J.E."/>
            <person name="Louis E.J."/>
            <person name="Li Z.Y."/>
            <person name="Maat M.J."/>
            <person name="Mallet L."/>
            <person name="Mannhaupt G."/>
            <person name="Messenguy F."/>
            <person name="Miosga T."/>
            <person name="Molemans F."/>
            <person name="Mueller S."/>
            <person name="Nasr F."/>
            <person name="Obermaier B."/>
            <person name="Perea J."/>
            <person name="Pierard A."/>
            <person name="Piravandi E."/>
            <person name="Pohl F.M."/>
            <person name="Pohl T.M."/>
            <person name="Potier S."/>
            <person name="Proft M."/>
            <person name="Purnelle B."/>
            <person name="Ramezani Rad M."/>
            <person name="Rieger M."/>
            <person name="Rose M."/>
            <person name="Schaaff-Gerstenschlaeger I."/>
            <person name="Scherens B."/>
            <person name="Schwarzlose C."/>
            <person name="Skala J."/>
            <person name="Slonimski P.P."/>
            <person name="Smits P.H.M."/>
            <person name="Souciet J.-L."/>
            <person name="Steensma H.Y."/>
            <person name="Stucka R."/>
            <person name="Urrestarazu L.A."/>
            <person name="van der Aart Q.J.M."/>
            <person name="Van Dyck L."/>
            <person name="Vassarotti A."/>
            <person name="Vetter I."/>
            <person name="Vierendeels F."/>
            <person name="Vissers S."/>
            <person name="Wagner G."/>
            <person name="de Wergifosse P."/>
            <person name="Wolfe K.H."/>
            <person name="Zagulski M."/>
            <person name="Zimmermann F.K."/>
            <person name="Mewes H.-W."/>
            <person name="Kleine K."/>
        </authorList>
    </citation>
    <scope>NUCLEOTIDE SEQUENCE [LARGE SCALE GENOMIC DNA]</scope>
    <source>
        <strain>ATCC 204508 / S288c</strain>
    </source>
</reference>
<reference key="3">
    <citation type="journal article" date="2014" name="G3 (Bethesda)">
        <title>The reference genome sequence of Saccharomyces cerevisiae: Then and now.</title>
        <authorList>
            <person name="Engel S.R."/>
            <person name="Dietrich F.S."/>
            <person name="Fisk D.G."/>
            <person name="Binkley G."/>
            <person name="Balakrishnan R."/>
            <person name="Costanzo M.C."/>
            <person name="Dwight S.S."/>
            <person name="Hitz B.C."/>
            <person name="Karra K."/>
            <person name="Nash R.S."/>
            <person name="Weng S."/>
            <person name="Wong E.D."/>
            <person name="Lloyd P."/>
            <person name="Skrzypek M.S."/>
            <person name="Miyasato S.R."/>
            <person name="Simison M."/>
            <person name="Cherry J.M."/>
        </authorList>
    </citation>
    <scope>GENOME REANNOTATION</scope>
    <source>
        <strain>ATCC 204508 / S288c</strain>
    </source>
</reference>
<reference key="4">
    <citation type="journal article" date="2000" name="J. Biol. Chem.">
        <title>Distinct physiological functions of thiol peroxidase isoenzymes in Saccharomyces cerevisiae.</title>
        <authorList>
            <person name="Park S.G."/>
            <person name="Cha M.-K."/>
            <person name="Jeong W."/>
            <person name="Kim I.-H."/>
        </authorList>
    </citation>
    <scope>CHARACTERIZATION</scope>
    <scope>MUTAGENESIS OF CYS-91</scope>
</reference>
<reference key="5">
    <citation type="journal article" date="2000" name="J. Biol. Chem.">
        <title>Mitochondria of Saccharomyces cerevisiae contain one-conserved cysteine type peroxiredoxin with thioredoxin peroxidase activity.</title>
        <authorList>
            <person name="Pedrajas J.R."/>
            <person name="Miranda-Vizuete A."/>
            <person name="Javanmardy N."/>
            <person name="Gustafsson J.A."/>
            <person name="Spyrou G."/>
        </authorList>
    </citation>
    <scope>FUNCTION</scope>
    <scope>BIOPHYSICOCHEMICAL PROPERTIES</scope>
    <scope>SUBCELLULAR LOCATION</scope>
    <scope>MUTAGENESIS OF CYS-38</scope>
</reference>
<reference key="6">
    <citation type="journal article" date="2003" name="Nature">
        <title>Global analysis of protein expression in yeast.</title>
        <authorList>
            <person name="Ghaemmaghami S."/>
            <person name="Huh W.-K."/>
            <person name="Bower K."/>
            <person name="Howson R.W."/>
            <person name="Belle A."/>
            <person name="Dephoure N."/>
            <person name="O'Shea E.K."/>
            <person name="Weissman J.S."/>
        </authorList>
    </citation>
    <scope>LEVEL OF PROTEIN EXPRESSION [LARGE SCALE ANALYSIS]</scope>
</reference>
<reference key="7">
    <citation type="journal article" date="2003" name="Proc. Natl. Acad. Sci. U.S.A.">
        <title>The proteome of Saccharomyces cerevisiae mitochondria.</title>
        <authorList>
            <person name="Sickmann A."/>
            <person name="Reinders J."/>
            <person name="Wagner Y."/>
            <person name="Joppich C."/>
            <person name="Zahedi R.P."/>
            <person name="Meyer H.E."/>
            <person name="Schoenfisch B."/>
            <person name="Perschil I."/>
            <person name="Chacinska A."/>
            <person name="Guiard B."/>
            <person name="Rehling P."/>
            <person name="Pfanner N."/>
            <person name="Meisinger C."/>
        </authorList>
    </citation>
    <scope>SUBCELLULAR LOCATION [LARGE SCALE ANALYSIS]</scope>
    <source>
        <strain>ATCC 76625 / YPH499</strain>
    </source>
</reference>
<reference key="8">
    <citation type="journal article" date="2007" name="Mol. Cell. Proteomics">
        <title>Profiling phosphoproteins of yeast mitochondria reveals a role of phosphorylation in assembly of the ATP synthase.</title>
        <authorList>
            <person name="Reinders J."/>
            <person name="Wagner K."/>
            <person name="Zahedi R.P."/>
            <person name="Stojanovski D."/>
            <person name="Eyrich B."/>
            <person name="van der Laan M."/>
            <person name="Rehling P."/>
            <person name="Sickmann A."/>
            <person name="Pfanner N."/>
            <person name="Meisinger C."/>
        </authorList>
    </citation>
    <scope>PHOSPHORYLATION [LARGE SCALE ANALYSIS] AT SER-53</scope>
    <scope>IDENTIFICATION BY MASS SPECTROMETRY [LARGE SCALE ANALYSIS]</scope>
    <source>
        <strain>ATCC 76625 / YPH499</strain>
    </source>
</reference>
<reference key="9">
    <citation type="journal article" date="2009" name="Mol. Cell. Biol.">
        <title>Antioxidant activity of the yeast mitochondrial one-Cys peroxiredoxin is dependent on thioredoxin reductase and glutathione in vivo.</title>
        <authorList>
            <person name="Greetham D."/>
            <person name="Grant C.M."/>
        </authorList>
    </citation>
    <scope>FUNCTION</scope>
    <scope>CATALYTIC ACTIVITY</scope>
</reference>
<reference key="10">
    <citation type="journal article" date="2010" name="Antioxid. Redox Signal.">
        <title>Glutaredoxin participates in the reduction of peroxides by the mitochondrial 1-CYS peroxiredoxin in Saccharomyces cerevisiae.</title>
        <authorList>
            <person name="Pedrajas J.R."/>
            <person name="Padilla C.A."/>
            <person name="McDonagh B."/>
            <person name="Barcena J.A."/>
        </authorList>
    </citation>
    <scope>FUNCTION</scope>
    <scope>CATALYTIC ACTIVITY</scope>
    <scope>SUBUNIT</scope>
</reference>
<name>PRX1_YEAST</name>
<dbReference type="EC" id="1.11.1.25" evidence="8"/>
<dbReference type="EC" id="1.11.1.27" evidence="7"/>
<dbReference type="EMBL" id="Z23261">
    <property type="protein sequence ID" value="CAA80784.1"/>
    <property type="molecule type" value="Genomic_DNA"/>
</dbReference>
<dbReference type="EMBL" id="Z35825">
    <property type="protein sequence ID" value="CAA84884.1"/>
    <property type="molecule type" value="Genomic_DNA"/>
</dbReference>
<dbReference type="EMBL" id="BK006936">
    <property type="protein sequence ID" value="DAA07056.1"/>
    <property type="molecule type" value="Genomic_DNA"/>
</dbReference>
<dbReference type="PIR" id="S39825">
    <property type="entry name" value="S39825"/>
</dbReference>
<dbReference type="RefSeq" id="NP_009489.1">
    <property type="nucleotide sequence ID" value="NM_001178304.1"/>
</dbReference>
<dbReference type="PDB" id="5YKJ">
    <property type="method" value="X-ray"/>
    <property type="resolution" value="1.53 A"/>
    <property type="chains" value="A=49-261"/>
</dbReference>
<dbReference type="PDB" id="5YKW">
    <property type="method" value="X-ray"/>
    <property type="resolution" value="2.08 A"/>
    <property type="chains" value="B=88-95"/>
</dbReference>
<dbReference type="PDBsum" id="5YKJ"/>
<dbReference type="PDBsum" id="5YKW"/>
<dbReference type="SMR" id="P34227"/>
<dbReference type="BioGRID" id="32635">
    <property type="interactions" value="92"/>
</dbReference>
<dbReference type="DIP" id="DIP-6412N"/>
<dbReference type="FunCoup" id="P34227">
    <property type="interactions" value="523"/>
</dbReference>
<dbReference type="IntAct" id="P34227">
    <property type="interactions" value="16"/>
</dbReference>
<dbReference type="MINT" id="P34227"/>
<dbReference type="STRING" id="4932.YBL064C"/>
<dbReference type="iPTMnet" id="P34227"/>
<dbReference type="PaxDb" id="4932-YBL064C"/>
<dbReference type="PeptideAtlas" id="P34227"/>
<dbReference type="TopDownProteomics" id="P34227"/>
<dbReference type="EnsemblFungi" id="YBL064C_mRNA">
    <property type="protein sequence ID" value="YBL064C"/>
    <property type="gene ID" value="YBL064C"/>
</dbReference>
<dbReference type="GeneID" id="852215"/>
<dbReference type="KEGG" id="sce:YBL064C"/>
<dbReference type="AGR" id="SGD:S000000160"/>
<dbReference type="SGD" id="S000000160">
    <property type="gene designation" value="PRX1"/>
</dbReference>
<dbReference type="VEuPathDB" id="FungiDB:YBL064C"/>
<dbReference type="eggNOG" id="KOG0854">
    <property type="taxonomic scope" value="Eukaryota"/>
</dbReference>
<dbReference type="GeneTree" id="ENSGT00940000171910"/>
<dbReference type="HOGENOM" id="CLU_042529_4_2_1"/>
<dbReference type="InParanoid" id="P34227"/>
<dbReference type="OMA" id="RLTMLYP"/>
<dbReference type="OrthoDB" id="2996783at2759"/>
<dbReference type="BioCyc" id="YEAST:G3O-28961-MONOMER"/>
<dbReference type="BRENDA" id="1.11.1.25">
    <property type="organism ID" value="984"/>
</dbReference>
<dbReference type="Reactome" id="R-SCE-6798695">
    <property type="pathway name" value="Neutrophil degranulation"/>
</dbReference>
<dbReference type="BioGRID-ORCS" id="852215">
    <property type="hits" value="1 hit in 10 CRISPR screens"/>
</dbReference>
<dbReference type="PRO" id="PR:P34227"/>
<dbReference type="Proteomes" id="UP000002311">
    <property type="component" value="Chromosome II"/>
</dbReference>
<dbReference type="RNAct" id="P34227">
    <property type="molecule type" value="protein"/>
</dbReference>
<dbReference type="GO" id="GO:0005829">
    <property type="term" value="C:cytosol"/>
    <property type="evidence" value="ECO:0000318"/>
    <property type="project" value="GO_Central"/>
</dbReference>
<dbReference type="GO" id="GO:0005739">
    <property type="term" value="C:mitochondrion"/>
    <property type="evidence" value="ECO:0000314"/>
    <property type="project" value="SGD"/>
</dbReference>
<dbReference type="GO" id="GO:0008379">
    <property type="term" value="F:thioredoxin peroxidase activity"/>
    <property type="evidence" value="ECO:0000314"/>
    <property type="project" value="SGD"/>
</dbReference>
<dbReference type="GO" id="GO:0045454">
    <property type="term" value="P:cell redox homeostasis"/>
    <property type="evidence" value="ECO:0000314"/>
    <property type="project" value="SGD"/>
</dbReference>
<dbReference type="GO" id="GO:0034599">
    <property type="term" value="P:cellular response to oxidative stress"/>
    <property type="evidence" value="ECO:0000318"/>
    <property type="project" value="GO_Central"/>
</dbReference>
<dbReference type="CDD" id="cd03016">
    <property type="entry name" value="PRX_1cys"/>
    <property type="match status" value="1"/>
</dbReference>
<dbReference type="FunFam" id="3.30.1020.10:FF:000001">
    <property type="entry name" value="1-Cys peroxiredoxin"/>
    <property type="match status" value="1"/>
</dbReference>
<dbReference type="FunFam" id="3.40.30.10:FF:000011">
    <property type="entry name" value="Peroxiredoxin PRX1"/>
    <property type="match status" value="1"/>
</dbReference>
<dbReference type="Gene3D" id="3.30.1020.10">
    <property type="entry name" value="Antioxidant, Horf6, Chain A, domain2"/>
    <property type="match status" value="1"/>
</dbReference>
<dbReference type="Gene3D" id="3.40.30.10">
    <property type="entry name" value="Glutaredoxin"/>
    <property type="match status" value="1"/>
</dbReference>
<dbReference type="InterPro" id="IPR000866">
    <property type="entry name" value="AhpC/TSA"/>
</dbReference>
<dbReference type="InterPro" id="IPR050217">
    <property type="entry name" value="Peroxiredoxin"/>
</dbReference>
<dbReference type="InterPro" id="IPR024706">
    <property type="entry name" value="Peroxiredoxin_AhpC-typ"/>
</dbReference>
<dbReference type="InterPro" id="IPR019479">
    <property type="entry name" value="Peroxiredoxin_C"/>
</dbReference>
<dbReference type="InterPro" id="IPR045020">
    <property type="entry name" value="PRX_1cys"/>
</dbReference>
<dbReference type="InterPro" id="IPR036249">
    <property type="entry name" value="Thioredoxin-like_sf"/>
</dbReference>
<dbReference type="InterPro" id="IPR013766">
    <property type="entry name" value="Thioredoxin_domain"/>
</dbReference>
<dbReference type="NCBIfam" id="NF009668">
    <property type="entry name" value="PRK13189.1"/>
    <property type="match status" value="1"/>
</dbReference>
<dbReference type="PANTHER" id="PTHR10681:SF171">
    <property type="entry name" value="PEROXIREDOXIN 4"/>
    <property type="match status" value="1"/>
</dbReference>
<dbReference type="PANTHER" id="PTHR10681">
    <property type="entry name" value="THIOREDOXIN PEROXIDASE"/>
    <property type="match status" value="1"/>
</dbReference>
<dbReference type="Pfam" id="PF10417">
    <property type="entry name" value="1-cysPrx_C"/>
    <property type="match status" value="1"/>
</dbReference>
<dbReference type="Pfam" id="PF00578">
    <property type="entry name" value="AhpC-TSA"/>
    <property type="match status" value="1"/>
</dbReference>
<dbReference type="PIRSF" id="PIRSF000239">
    <property type="entry name" value="AHPC"/>
    <property type="match status" value="1"/>
</dbReference>
<dbReference type="SUPFAM" id="SSF52833">
    <property type="entry name" value="Thioredoxin-like"/>
    <property type="match status" value="1"/>
</dbReference>
<dbReference type="PROSITE" id="PS51352">
    <property type="entry name" value="THIOREDOXIN_2"/>
    <property type="match status" value="1"/>
</dbReference>
<proteinExistence type="evidence at protein level"/>
<feature type="transit peptide" description="Mitochondrion" evidence="1">
    <location>
        <begin position="1"/>
        <end position="13"/>
    </location>
</feature>
<feature type="chain" id="PRO_0000135151" description="Peroxiredoxin PRX1, mitochondrial">
    <location>
        <begin position="14"/>
        <end position="261"/>
    </location>
</feature>
<feature type="domain" description="Thioredoxin" evidence="2">
    <location>
        <begin position="49"/>
        <end position="212"/>
    </location>
</feature>
<feature type="active site" description="Cysteine sulfenic acid (-SOH) intermediate" evidence="12">
    <location>
        <position position="91"/>
    </location>
</feature>
<feature type="modified residue" description="Phosphoserine" evidence="16">
    <location>
        <position position="53"/>
    </location>
</feature>
<feature type="disulfide bond" description="Interchain" evidence="13">
    <location>
        <position position="38"/>
    </location>
</feature>
<feature type="mutagenesis site" description="Impairs dimer formation." evidence="4">
    <original>C</original>
    <variation>S</variation>
    <location>
        <position position="38"/>
    </location>
</feature>
<feature type="mutagenesis site" description="No activity." evidence="3">
    <original>C</original>
    <variation>S</variation>
    <location>
        <position position="91"/>
    </location>
</feature>
<feature type="strand" evidence="17">
    <location>
        <begin position="65"/>
        <end position="68"/>
    </location>
</feature>
<feature type="helix" evidence="17">
    <location>
        <begin position="69"/>
        <end position="73"/>
    </location>
</feature>
<feature type="strand" evidence="17">
    <location>
        <begin position="76"/>
        <end position="84"/>
    </location>
</feature>
<feature type="helix" evidence="17">
    <location>
        <begin position="89"/>
        <end position="100"/>
    </location>
</feature>
<feature type="helix" evidence="17">
    <location>
        <begin position="102"/>
        <end position="106"/>
    </location>
</feature>
<feature type="turn" evidence="17">
    <location>
        <begin position="107"/>
        <end position="109"/>
    </location>
</feature>
<feature type="strand" evidence="17">
    <location>
        <begin position="110"/>
        <end position="118"/>
    </location>
</feature>
<feature type="helix" evidence="17">
    <location>
        <begin position="120"/>
        <end position="134"/>
    </location>
</feature>
<feature type="strand" evidence="17">
    <location>
        <begin position="143"/>
        <end position="145"/>
    </location>
</feature>
<feature type="helix" evidence="17">
    <location>
        <begin position="150"/>
        <end position="154"/>
    </location>
</feature>
<feature type="strand" evidence="17">
    <location>
        <begin position="167"/>
        <end position="169"/>
    </location>
</feature>
<feature type="turn" evidence="17">
    <location>
        <begin position="170"/>
        <end position="173"/>
    </location>
</feature>
<feature type="strand" evidence="17">
    <location>
        <begin position="176"/>
        <end position="180"/>
    </location>
</feature>
<feature type="strand" evidence="17">
    <location>
        <begin position="184"/>
        <end position="191"/>
    </location>
</feature>
<feature type="helix" evidence="17">
    <location>
        <begin position="200"/>
        <end position="216"/>
    </location>
</feature>
<feature type="helix" evidence="17">
    <location>
        <begin position="238"/>
        <end position="245"/>
    </location>
</feature>
<feature type="strand" evidence="17">
    <location>
        <begin position="249"/>
        <end position="252"/>
    </location>
</feature>
<feature type="strand" evidence="17">
    <location>
        <begin position="255"/>
        <end position="258"/>
    </location>
</feature>
<keyword id="KW-0002">3D-structure</keyword>
<keyword id="KW-0049">Antioxidant</keyword>
<keyword id="KW-1015">Disulfide bond</keyword>
<keyword id="KW-0496">Mitochondrion</keyword>
<keyword id="KW-0560">Oxidoreductase</keyword>
<keyword id="KW-0575">Peroxidase</keyword>
<keyword id="KW-0597">Phosphoprotein</keyword>
<keyword id="KW-0676">Redox-active center</keyword>
<keyword id="KW-1185">Reference proteome</keyword>
<keyword id="KW-0809">Transit peptide</keyword>
<organism>
    <name type="scientific">Saccharomyces cerevisiae (strain ATCC 204508 / S288c)</name>
    <name type="common">Baker's yeast</name>
    <dbReference type="NCBI Taxonomy" id="559292"/>
    <lineage>
        <taxon>Eukaryota</taxon>
        <taxon>Fungi</taxon>
        <taxon>Dikarya</taxon>
        <taxon>Ascomycota</taxon>
        <taxon>Saccharomycotina</taxon>
        <taxon>Saccharomycetes</taxon>
        <taxon>Saccharomycetales</taxon>
        <taxon>Saccharomycetaceae</taxon>
        <taxon>Saccharomyces</taxon>
    </lineage>
</organism>
<evidence type="ECO:0000255" key="1"/>
<evidence type="ECO:0000255" key="2">
    <source>
        <dbReference type="PROSITE-ProRule" id="PRU00691"/>
    </source>
</evidence>
<evidence type="ECO:0000269" key="3">
    <source>
    </source>
</evidence>
<evidence type="ECO:0000269" key="4">
    <source>
    </source>
</evidence>
<evidence type="ECO:0000269" key="5">
    <source>
    </source>
</evidence>
<evidence type="ECO:0000269" key="6">
    <source>
    </source>
</evidence>
<evidence type="ECO:0000269" key="7">
    <source>
    </source>
</evidence>
<evidence type="ECO:0000269" key="8">
    <source>
    </source>
</evidence>
<evidence type="ECO:0000303" key="9">
    <source>
    </source>
</evidence>
<evidence type="ECO:0000303" key="10">
    <source>
    </source>
</evidence>
<evidence type="ECO:0000305" key="11"/>
<evidence type="ECO:0000305" key="12">
    <source>
    </source>
</evidence>
<evidence type="ECO:0000305" key="13">
    <source>
    </source>
</evidence>
<evidence type="ECO:0000305" key="14">
    <source>
    </source>
</evidence>
<evidence type="ECO:0000305" key="15">
    <source>
    </source>
</evidence>
<evidence type="ECO:0007744" key="16">
    <source>
    </source>
</evidence>
<evidence type="ECO:0007829" key="17">
    <source>
        <dbReference type="PDB" id="5YKJ"/>
    </source>
</evidence>
<gene>
    <name evidence="10" type="primary">PRX1</name>
    <name type="ordered locus">YBL064C</name>
    <name type="ORF">YBL0503</name>
    <name type="ORF">YBL0524</name>
</gene>
<sequence length="261" mass="29496">MFSRICSAQLKRTAWTLPKQAHLQSQTIKTFATAPILCKQFKQSDQPRLRINSDAPNFDADTTVGKINFYDYLGDSWGVLFSHPADFTPVCTTEVSAFAKLKPEFDKRNVKLIGLSVEDVESHEKWIQDIKEIAKVKNVGFPIIGDTFRNVAFLYDMVDAEGFKNINDGSLKTVRSVFVIDPKKKIRLIFTYPSTVGRNTSEVLRVIDALQLTDKEGVVTPINWQPADDVIIPPSVSNDEAKAKFGQFNEIKPYLRFTKSK</sequence>